<reference key="1">
    <citation type="journal article" date="1999" name="Cytogenet. Cell Genet.">
        <title>Cloning of the murine Mist1 gene and assignment to mouse chromosome band 5G2-5G3.</title>
        <authorList>
            <person name="Pin C.L."/>
            <person name="Lemercier C."/>
            <person name="Konieczny S.F."/>
        </authorList>
    </citation>
    <scope>NUCLEOTIDE SEQUENCE [GENOMIC DNA]</scope>
</reference>
<reference key="2">
    <citation type="submission" date="1998-02" db="EMBL/GenBank/DDBJ databases">
        <authorList>
            <person name="Lemercier C."/>
            <person name="Konieczny S.F."/>
        </authorList>
    </citation>
    <scope>NUCLEOTIDE SEQUENCE [MRNA]</scope>
    <source>
        <tissue>Spleen</tissue>
    </source>
</reference>
<reference key="3">
    <citation type="journal article" date="2005" name="Science">
        <title>The transcriptional landscape of the mammalian genome.</title>
        <authorList>
            <person name="Carninci P."/>
            <person name="Kasukawa T."/>
            <person name="Katayama S."/>
            <person name="Gough J."/>
            <person name="Frith M.C."/>
            <person name="Maeda N."/>
            <person name="Oyama R."/>
            <person name="Ravasi T."/>
            <person name="Lenhard B."/>
            <person name="Wells C."/>
            <person name="Kodzius R."/>
            <person name="Shimokawa K."/>
            <person name="Bajic V.B."/>
            <person name="Brenner S.E."/>
            <person name="Batalov S."/>
            <person name="Forrest A.R."/>
            <person name="Zavolan M."/>
            <person name="Davis M.J."/>
            <person name="Wilming L.G."/>
            <person name="Aidinis V."/>
            <person name="Allen J.E."/>
            <person name="Ambesi-Impiombato A."/>
            <person name="Apweiler R."/>
            <person name="Aturaliya R.N."/>
            <person name="Bailey T.L."/>
            <person name="Bansal M."/>
            <person name="Baxter L."/>
            <person name="Beisel K.W."/>
            <person name="Bersano T."/>
            <person name="Bono H."/>
            <person name="Chalk A.M."/>
            <person name="Chiu K.P."/>
            <person name="Choudhary V."/>
            <person name="Christoffels A."/>
            <person name="Clutterbuck D.R."/>
            <person name="Crowe M.L."/>
            <person name="Dalla E."/>
            <person name="Dalrymple B.P."/>
            <person name="de Bono B."/>
            <person name="Della Gatta G."/>
            <person name="di Bernardo D."/>
            <person name="Down T."/>
            <person name="Engstrom P."/>
            <person name="Fagiolini M."/>
            <person name="Faulkner G."/>
            <person name="Fletcher C.F."/>
            <person name="Fukushima T."/>
            <person name="Furuno M."/>
            <person name="Futaki S."/>
            <person name="Gariboldi M."/>
            <person name="Georgii-Hemming P."/>
            <person name="Gingeras T.R."/>
            <person name="Gojobori T."/>
            <person name="Green R.E."/>
            <person name="Gustincich S."/>
            <person name="Harbers M."/>
            <person name="Hayashi Y."/>
            <person name="Hensch T.K."/>
            <person name="Hirokawa N."/>
            <person name="Hill D."/>
            <person name="Huminiecki L."/>
            <person name="Iacono M."/>
            <person name="Ikeo K."/>
            <person name="Iwama A."/>
            <person name="Ishikawa T."/>
            <person name="Jakt M."/>
            <person name="Kanapin A."/>
            <person name="Katoh M."/>
            <person name="Kawasawa Y."/>
            <person name="Kelso J."/>
            <person name="Kitamura H."/>
            <person name="Kitano H."/>
            <person name="Kollias G."/>
            <person name="Krishnan S.P."/>
            <person name="Kruger A."/>
            <person name="Kummerfeld S.K."/>
            <person name="Kurochkin I.V."/>
            <person name="Lareau L.F."/>
            <person name="Lazarevic D."/>
            <person name="Lipovich L."/>
            <person name="Liu J."/>
            <person name="Liuni S."/>
            <person name="McWilliam S."/>
            <person name="Madan Babu M."/>
            <person name="Madera M."/>
            <person name="Marchionni L."/>
            <person name="Matsuda H."/>
            <person name="Matsuzawa S."/>
            <person name="Miki H."/>
            <person name="Mignone F."/>
            <person name="Miyake S."/>
            <person name="Morris K."/>
            <person name="Mottagui-Tabar S."/>
            <person name="Mulder N."/>
            <person name="Nakano N."/>
            <person name="Nakauchi H."/>
            <person name="Ng P."/>
            <person name="Nilsson R."/>
            <person name="Nishiguchi S."/>
            <person name="Nishikawa S."/>
            <person name="Nori F."/>
            <person name="Ohara O."/>
            <person name="Okazaki Y."/>
            <person name="Orlando V."/>
            <person name="Pang K.C."/>
            <person name="Pavan W.J."/>
            <person name="Pavesi G."/>
            <person name="Pesole G."/>
            <person name="Petrovsky N."/>
            <person name="Piazza S."/>
            <person name="Reed J."/>
            <person name="Reid J.F."/>
            <person name="Ring B.Z."/>
            <person name="Ringwald M."/>
            <person name="Rost B."/>
            <person name="Ruan Y."/>
            <person name="Salzberg S.L."/>
            <person name="Sandelin A."/>
            <person name="Schneider C."/>
            <person name="Schoenbach C."/>
            <person name="Sekiguchi K."/>
            <person name="Semple C.A."/>
            <person name="Seno S."/>
            <person name="Sessa L."/>
            <person name="Sheng Y."/>
            <person name="Shibata Y."/>
            <person name="Shimada H."/>
            <person name="Shimada K."/>
            <person name="Silva D."/>
            <person name="Sinclair B."/>
            <person name="Sperling S."/>
            <person name="Stupka E."/>
            <person name="Sugiura K."/>
            <person name="Sultana R."/>
            <person name="Takenaka Y."/>
            <person name="Taki K."/>
            <person name="Tammoja K."/>
            <person name="Tan S.L."/>
            <person name="Tang S."/>
            <person name="Taylor M.S."/>
            <person name="Tegner J."/>
            <person name="Teichmann S.A."/>
            <person name="Ueda H.R."/>
            <person name="van Nimwegen E."/>
            <person name="Verardo R."/>
            <person name="Wei C.L."/>
            <person name="Yagi K."/>
            <person name="Yamanishi H."/>
            <person name="Zabarovsky E."/>
            <person name="Zhu S."/>
            <person name="Zimmer A."/>
            <person name="Hide W."/>
            <person name="Bult C."/>
            <person name="Grimmond S.M."/>
            <person name="Teasdale R.D."/>
            <person name="Liu E.T."/>
            <person name="Brusic V."/>
            <person name="Quackenbush J."/>
            <person name="Wahlestedt C."/>
            <person name="Mattick J.S."/>
            <person name="Hume D.A."/>
            <person name="Kai C."/>
            <person name="Sasaki D."/>
            <person name="Tomaru Y."/>
            <person name="Fukuda S."/>
            <person name="Kanamori-Katayama M."/>
            <person name="Suzuki M."/>
            <person name="Aoki J."/>
            <person name="Arakawa T."/>
            <person name="Iida J."/>
            <person name="Imamura K."/>
            <person name="Itoh M."/>
            <person name="Kato T."/>
            <person name="Kawaji H."/>
            <person name="Kawagashira N."/>
            <person name="Kawashima T."/>
            <person name="Kojima M."/>
            <person name="Kondo S."/>
            <person name="Konno H."/>
            <person name="Nakano K."/>
            <person name="Ninomiya N."/>
            <person name="Nishio T."/>
            <person name="Okada M."/>
            <person name="Plessy C."/>
            <person name="Shibata K."/>
            <person name="Shiraki T."/>
            <person name="Suzuki S."/>
            <person name="Tagami M."/>
            <person name="Waki K."/>
            <person name="Watahiki A."/>
            <person name="Okamura-Oho Y."/>
            <person name="Suzuki H."/>
            <person name="Kawai J."/>
            <person name="Hayashizaki Y."/>
        </authorList>
    </citation>
    <scope>NUCLEOTIDE SEQUENCE [LARGE SCALE MRNA]</scope>
    <source>
        <strain>C57BL/6J</strain>
        <tissue>Urinary bladder</tissue>
    </source>
</reference>
<reference key="4">
    <citation type="journal article" date="2004" name="Genome Res.">
        <title>The status, quality, and expansion of the NIH full-length cDNA project: the Mammalian Gene Collection (MGC).</title>
        <authorList>
            <consortium name="The MGC Project Team"/>
        </authorList>
    </citation>
    <scope>NUCLEOTIDE SEQUENCE [LARGE SCALE MRNA]</scope>
    <source>
        <tissue>Salivary gland</tissue>
    </source>
</reference>
<reference key="5">
    <citation type="journal article" date="1997" name="Dev. Biol.">
        <title>Mist1: a novel basic helix-loop-helix transcription factor exhibits a developmentally regulated expression pattern.</title>
        <authorList>
            <person name="Lemercier C."/>
            <person name="To R.Q."/>
            <person name="Swanson B.J."/>
            <person name="Lyons G.E."/>
            <person name="Konieczny S.F."/>
        </authorList>
    </citation>
    <scope>DEVELOPMENTAL STAGE</scope>
</reference>
<reference key="6">
    <citation type="journal article" date="1998" name="EMBO J.">
        <title>The basic helix-loop-helix transcription factor Mist1 functions as a transcriptional repressor of myoD.</title>
        <authorList>
            <person name="Lemercier C."/>
            <person name="To R.Q."/>
            <person name="Carrasco R.A."/>
            <person name="Konieczny S.F."/>
        </authorList>
    </citation>
    <scope>FUNCTION</scope>
</reference>
<reference key="7">
    <citation type="journal article" date="2001" name="J. Cell Biol.">
        <title>The bHLH transcription factor Mist1 is required to maintain exocrine pancreas cell organization and acinar cell identity.</title>
        <authorList>
            <person name="Pin C.L."/>
            <person name="Rukstalis J.M."/>
            <person name="Johnson C."/>
            <person name="Konieczny S.F."/>
        </authorList>
    </citation>
    <scope>TISSUE SPECIFICITY</scope>
</reference>
<reference key="8">
    <citation type="journal article" date="2004" name="Mech. Dev.">
        <title>Mist1 is necessary for the establishment of granule organization in serous exocrine cells of the gastrointestinal tract.</title>
        <authorList>
            <person name="Johnson C.L."/>
            <person name="Kowalik A.S."/>
            <person name="Rajakumar N."/>
            <person name="Pin C.L."/>
        </authorList>
    </citation>
    <scope>FUNCTION</scope>
    <scope>DISRUPTION PHENOTYPE</scope>
</reference>
<reference key="9">
    <citation type="journal article" date="2005" name="J. Biol. Chem.">
        <title>Aberrant localization of intracellular organelles, Ca2+ signaling, and exocytosis in Mist1 null mice.</title>
        <authorList>
            <person name="Luo X."/>
            <person name="Shin D.M."/>
            <person name="Wang X."/>
            <person name="Konieczny S.F."/>
            <person name="Muallem S."/>
        </authorList>
    </citation>
    <scope>FUNCTION</scope>
    <scope>DISRUPTION PHENOTYPE</scope>
</reference>
<reference key="10">
    <citation type="journal article" date="2007" name="Mol. Cell">
        <title>XBP1 controls diverse cell type- and condition-specific transcriptional regulatory networks.</title>
        <authorList>
            <person name="Acosta-Alvear D."/>
            <person name="Zhou Y."/>
            <person name="Blais A."/>
            <person name="Tsikitis M."/>
            <person name="Lents N.H."/>
            <person name="Arias C."/>
            <person name="Lennon C.J."/>
            <person name="Kluger Y."/>
            <person name="Dynlacht B.D."/>
        </authorList>
    </citation>
    <scope>FUNCTION</scope>
    <scope>INDUCTION</scope>
</reference>
<reference key="11">
    <citation type="journal article" date="2010" name="Cell">
        <title>A tissue-specific atlas of mouse protein phosphorylation and expression.</title>
        <authorList>
            <person name="Huttlin E.L."/>
            <person name="Jedrychowski M.P."/>
            <person name="Elias J.E."/>
            <person name="Goswami T."/>
            <person name="Rad R."/>
            <person name="Beausoleil S.A."/>
            <person name="Villen J."/>
            <person name="Haas W."/>
            <person name="Sowa M.E."/>
            <person name="Gygi S.P."/>
        </authorList>
    </citation>
    <scope>PHOSPHORYLATION [LARGE SCALE ANALYSIS] AT THR-12 AND THR-25</scope>
    <scope>IDENTIFICATION BY MASS SPECTROMETRY [LARGE SCALE ANALYSIS]</scope>
    <source>
        <tissue>Pancreas</tissue>
    </source>
</reference>
<dbReference type="EMBL" id="AF091858">
    <property type="protein sequence ID" value="AAD51766.1"/>
    <property type="molecule type" value="Genomic_DNA"/>
</dbReference>
<dbReference type="EMBL" id="AF049660">
    <property type="protein sequence ID" value="AAF17706.1"/>
    <property type="molecule type" value="mRNA"/>
</dbReference>
<dbReference type="EMBL" id="AK020643">
    <property type="protein sequence ID" value="BAB32160.1"/>
    <property type="molecule type" value="mRNA"/>
</dbReference>
<dbReference type="EMBL" id="BC011486">
    <property type="protein sequence ID" value="AAH11486.1"/>
    <property type="molecule type" value="mRNA"/>
</dbReference>
<dbReference type="CCDS" id="CCDS19847.1"/>
<dbReference type="RefSeq" id="NP_034930.1">
    <property type="nucleotide sequence ID" value="NM_010800.4"/>
</dbReference>
<dbReference type="SMR" id="Q9QYC3"/>
<dbReference type="BioGRID" id="201426">
    <property type="interactions" value="1"/>
</dbReference>
<dbReference type="FunCoup" id="Q9QYC3">
    <property type="interactions" value="937"/>
</dbReference>
<dbReference type="STRING" id="10090.ENSMUSP00000055493"/>
<dbReference type="iPTMnet" id="Q9QYC3"/>
<dbReference type="PhosphoSitePlus" id="Q9QYC3"/>
<dbReference type="PaxDb" id="10090-ENSMUSP00000055493"/>
<dbReference type="ProteomicsDB" id="265211"/>
<dbReference type="Antibodypedia" id="30223">
    <property type="antibodies" value="123 antibodies from 25 providers"/>
</dbReference>
<dbReference type="DNASU" id="17341"/>
<dbReference type="Ensembl" id="ENSMUST00000060747.8">
    <property type="protein sequence ID" value="ENSMUSP00000055493.8"/>
    <property type="gene ID" value="ENSMUSG00000052271.8"/>
</dbReference>
<dbReference type="GeneID" id="17341"/>
<dbReference type="KEGG" id="mmu:17341"/>
<dbReference type="UCSC" id="uc009alh.1">
    <property type="organism name" value="mouse"/>
</dbReference>
<dbReference type="AGR" id="MGI:891976"/>
<dbReference type="CTD" id="168620"/>
<dbReference type="MGI" id="MGI:891976">
    <property type="gene designation" value="Bhlha15"/>
</dbReference>
<dbReference type="VEuPathDB" id="HostDB:ENSMUSG00000052271"/>
<dbReference type="eggNOG" id="KOG3898">
    <property type="taxonomic scope" value="Eukaryota"/>
</dbReference>
<dbReference type="GeneTree" id="ENSGT00940000161824"/>
<dbReference type="HOGENOM" id="CLU_097977_2_0_1"/>
<dbReference type="InParanoid" id="Q9QYC3"/>
<dbReference type="OMA" id="HRYSTQI"/>
<dbReference type="OrthoDB" id="5969565at2759"/>
<dbReference type="PhylomeDB" id="Q9QYC3"/>
<dbReference type="TreeFam" id="TF315153"/>
<dbReference type="BioGRID-ORCS" id="17341">
    <property type="hits" value="2 hits in 82 CRISPR screens"/>
</dbReference>
<dbReference type="ChiTaRS" id="Bhlha15">
    <property type="organism name" value="mouse"/>
</dbReference>
<dbReference type="PRO" id="PR:Q9QYC3"/>
<dbReference type="Proteomes" id="UP000000589">
    <property type="component" value="Chromosome 5"/>
</dbReference>
<dbReference type="RNAct" id="Q9QYC3">
    <property type="molecule type" value="protein"/>
</dbReference>
<dbReference type="Bgee" id="ENSMUSG00000052271">
    <property type="expression patterns" value="Expressed in submandibular gland and 71 other cell types or tissues"/>
</dbReference>
<dbReference type="GO" id="GO:0005634">
    <property type="term" value="C:nucleus"/>
    <property type="evidence" value="ECO:0000314"/>
    <property type="project" value="MGI"/>
</dbReference>
<dbReference type="GO" id="GO:0003677">
    <property type="term" value="F:DNA binding"/>
    <property type="evidence" value="ECO:0000314"/>
    <property type="project" value="MGI"/>
</dbReference>
<dbReference type="GO" id="GO:0001228">
    <property type="term" value="F:DNA-binding transcription activator activity, RNA polymerase II-specific"/>
    <property type="evidence" value="ECO:0000314"/>
    <property type="project" value="NTNU_SB"/>
</dbReference>
<dbReference type="GO" id="GO:0042802">
    <property type="term" value="F:identical protein binding"/>
    <property type="evidence" value="ECO:0000353"/>
    <property type="project" value="MGI"/>
</dbReference>
<dbReference type="GO" id="GO:0046983">
    <property type="term" value="F:protein dimerization activity"/>
    <property type="evidence" value="ECO:0007669"/>
    <property type="project" value="InterPro"/>
</dbReference>
<dbReference type="GO" id="GO:0000977">
    <property type="term" value="F:RNA polymerase II transcription regulatory region sequence-specific DNA binding"/>
    <property type="evidence" value="ECO:0000314"/>
    <property type="project" value="NTNU_SB"/>
</dbReference>
<dbReference type="GO" id="GO:0019722">
    <property type="term" value="P:calcium-mediated signaling"/>
    <property type="evidence" value="ECO:0000315"/>
    <property type="project" value="MGI"/>
</dbReference>
<dbReference type="GO" id="GO:0030154">
    <property type="term" value="P:cell differentiation"/>
    <property type="evidence" value="ECO:0000316"/>
    <property type="project" value="MGI"/>
</dbReference>
<dbReference type="GO" id="GO:0044331">
    <property type="term" value="P:cell-cell adhesion mediated by cadherin"/>
    <property type="evidence" value="ECO:0000316"/>
    <property type="project" value="MGI"/>
</dbReference>
<dbReference type="GO" id="GO:0045216">
    <property type="term" value="P:cell-cell junction organization"/>
    <property type="evidence" value="ECO:0000316"/>
    <property type="project" value="MGI"/>
</dbReference>
<dbReference type="GO" id="GO:0007267">
    <property type="term" value="P:cell-cell signaling"/>
    <property type="evidence" value="ECO:0000315"/>
    <property type="project" value="MGI"/>
</dbReference>
<dbReference type="GO" id="GO:0042149">
    <property type="term" value="P:cellular response to glucose starvation"/>
    <property type="evidence" value="ECO:0000314"/>
    <property type="project" value="UniProtKB"/>
</dbReference>
<dbReference type="GO" id="GO:0030968">
    <property type="term" value="P:endoplasmic reticulum unfolded protein response"/>
    <property type="evidence" value="ECO:0000314"/>
    <property type="project" value="UniProtKB"/>
</dbReference>
<dbReference type="GO" id="GO:0051649">
    <property type="term" value="P:establishment of localization in cell"/>
    <property type="evidence" value="ECO:0000315"/>
    <property type="project" value="MGI"/>
</dbReference>
<dbReference type="GO" id="GO:0007186">
    <property type="term" value="P:G protein-coupled receptor signaling pathway"/>
    <property type="evidence" value="ECO:0000314"/>
    <property type="project" value="MGI"/>
</dbReference>
<dbReference type="GO" id="GO:0002071">
    <property type="term" value="P:glandular epithelial cell maturation"/>
    <property type="evidence" value="ECO:0000315"/>
    <property type="project" value="MGI"/>
</dbReference>
<dbReference type="GO" id="GO:0042593">
    <property type="term" value="P:glucose homeostasis"/>
    <property type="evidence" value="ECO:0000315"/>
    <property type="project" value="MGI"/>
</dbReference>
<dbReference type="GO" id="GO:0007030">
    <property type="term" value="P:Golgi organization"/>
    <property type="evidence" value="ECO:0000315"/>
    <property type="project" value="MGI"/>
</dbReference>
<dbReference type="GO" id="GO:0048312">
    <property type="term" value="P:intracellular distribution of mitochondria"/>
    <property type="evidence" value="ECO:0000315"/>
    <property type="project" value="MGI"/>
</dbReference>
<dbReference type="GO" id="GO:0051674">
    <property type="term" value="P:localization of cell"/>
    <property type="evidence" value="ECO:0000316"/>
    <property type="project" value="MGI"/>
</dbReference>
<dbReference type="GO" id="GO:0006851">
    <property type="term" value="P:mitochondrial calcium ion transmembrane transport"/>
    <property type="evidence" value="ECO:0000315"/>
    <property type="project" value="MGI"/>
</dbReference>
<dbReference type="GO" id="GO:0010832">
    <property type="term" value="P:negative regulation of myotube differentiation"/>
    <property type="evidence" value="ECO:0000314"/>
    <property type="project" value="UniProtKB"/>
</dbReference>
<dbReference type="GO" id="GO:0045944">
    <property type="term" value="P:positive regulation of transcription by RNA polymerase II"/>
    <property type="evidence" value="ECO:0000314"/>
    <property type="project" value="MGI"/>
</dbReference>
<dbReference type="GO" id="GO:0006355">
    <property type="term" value="P:regulation of DNA-templated transcription"/>
    <property type="evidence" value="ECO:0000304"/>
    <property type="project" value="MGI"/>
</dbReference>
<dbReference type="GO" id="GO:0072560">
    <property type="term" value="P:type B pancreatic cell maturation"/>
    <property type="evidence" value="ECO:0000315"/>
    <property type="project" value="MGI"/>
</dbReference>
<dbReference type="CDD" id="cd19711">
    <property type="entry name" value="bHLH_TS_MIST1"/>
    <property type="match status" value="1"/>
</dbReference>
<dbReference type="FunFam" id="4.10.280.10:FF:000065">
    <property type="entry name" value="class A basic helix-loop-helix protein 15"/>
    <property type="match status" value="1"/>
</dbReference>
<dbReference type="Gene3D" id="4.10.280.10">
    <property type="entry name" value="Helix-loop-helix DNA-binding domain"/>
    <property type="match status" value="1"/>
</dbReference>
<dbReference type="InterPro" id="IPR011598">
    <property type="entry name" value="bHLH_dom"/>
</dbReference>
<dbReference type="InterPro" id="IPR050359">
    <property type="entry name" value="bHLH_transcription_factors"/>
</dbReference>
<dbReference type="InterPro" id="IPR036638">
    <property type="entry name" value="HLH_DNA-bd_sf"/>
</dbReference>
<dbReference type="PANTHER" id="PTHR19290">
    <property type="entry name" value="BASIC HELIX-LOOP-HELIX PROTEIN NEUROGENIN-RELATED"/>
    <property type="match status" value="1"/>
</dbReference>
<dbReference type="PANTHER" id="PTHR19290:SF160">
    <property type="entry name" value="CLASS A BASIC HELIX-LOOP-HELIX PROTEIN 15"/>
    <property type="match status" value="1"/>
</dbReference>
<dbReference type="Pfam" id="PF00010">
    <property type="entry name" value="HLH"/>
    <property type="match status" value="1"/>
</dbReference>
<dbReference type="SMART" id="SM00353">
    <property type="entry name" value="HLH"/>
    <property type="match status" value="1"/>
</dbReference>
<dbReference type="SUPFAM" id="SSF47459">
    <property type="entry name" value="HLH, helix-loop-helix DNA-binding domain"/>
    <property type="match status" value="1"/>
</dbReference>
<dbReference type="PROSITE" id="PS50888">
    <property type="entry name" value="BHLH"/>
    <property type="match status" value="1"/>
</dbReference>
<sequence length="197" mass="22150">MKTKNRPPRRRTPMQDTEATPGEQTPDRPQSGSGGSELTKGLRSRTARASGGRGEVSRRRQGSGGRRENSVQRRLESNERERQRMHKLNNAFQALREVIPHVRADKKLSKIETLTLAKNYIKSLTATILTMSSSRLPGLEAPGPAPGPKLYQHYHHQQQQQQQQQQVAGAMLGVTEDQPQGHLQRYSTQIHSFREGS</sequence>
<protein>
    <recommendedName>
        <fullName>Class A basic helix-loop-helix protein 15</fullName>
        <shortName>bHLHa15</shortName>
    </recommendedName>
    <alternativeName>
        <fullName>Class B basic helix-loop-helix protein 8</fullName>
        <shortName>bHLHb8</shortName>
    </alternativeName>
    <alternativeName>
        <fullName>Muscle, intestine and stomach expression 1</fullName>
        <shortName>MIST-1</shortName>
    </alternativeName>
</protein>
<accession>Q9QYC3</accession>
<accession>Q9QYE4</accession>
<name>BHA15_MOUSE</name>
<gene>
    <name type="primary">Bhlha15</name>
    <name type="synonym">Bhlhb8</name>
    <name type="synonym">Mist1</name>
</gene>
<evidence type="ECO:0000255" key="1">
    <source>
        <dbReference type="PROSITE-ProRule" id="PRU00981"/>
    </source>
</evidence>
<evidence type="ECO:0000256" key="2">
    <source>
        <dbReference type="SAM" id="MobiDB-lite"/>
    </source>
</evidence>
<evidence type="ECO:0000269" key="3">
    <source>
    </source>
</evidence>
<evidence type="ECO:0000269" key="4">
    <source>
    </source>
</evidence>
<evidence type="ECO:0000269" key="5">
    <source>
    </source>
</evidence>
<evidence type="ECO:0000269" key="6">
    <source>
    </source>
</evidence>
<evidence type="ECO:0000269" key="7">
    <source>
    </source>
</evidence>
<evidence type="ECO:0000269" key="8">
    <source>
    </source>
</evidence>
<evidence type="ECO:0000305" key="9"/>
<evidence type="ECO:0007744" key="10">
    <source>
    </source>
</evidence>
<keyword id="KW-0238">DNA-binding</keyword>
<keyword id="KW-0539">Nucleus</keyword>
<keyword id="KW-0597">Phosphoprotein</keyword>
<keyword id="KW-1185">Reference proteome</keyword>
<keyword id="KW-0678">Repressor</keyword>
<keyword id="KW-0804">Transcription</keyword>
<keyword id="KW-0805">Transcription regulation</keyword>
<comment type="function">
    <text evidence="4 5 6 8">Plays a role in controlling the transcriptional activity of MyoD, ensuring that expanding myoblast populations remain undifferentiated (PubMed:17612490). Repression may occur through muscle-specific E-box occupancy by homodimers. May also negatively regulate bHLH-mediated transcription through an N-terminal repressor domain. Serves as a key regulator of acinar cell function, stability, and identity. Also required for normal organelle localization in exocrine cells and for mitochondrial calcium ion transport. May function as a unique regulator of gene expression in several different embryonic and postnatal cell lineages. Binds to the E-box consensus sequence 5'-CANNTG-3'.</text>
</comment>
<comment type="subunit">
    <text>Forms homodimers or heterodimers with TCF3 gene products E12 and E47. These dimers bind to the E-box site, however, heterodimer with MYOD1 does not bind target DNA.</text>
</comment>
<comment type="subcellular location">
    <subcellularLocation>
        <location evidence="9">Nucleus</location>
    </subcellularLocation>
</comment>
<comment type="tissue specificity">
    <text evidence="3">Expressed in pancreatic tissue only in acinar cells. There is a complete absence of expression in intra- or interlobular pancreatic ducts and in all islet cells.</text>
</comment>
<comment type="developmental stage">
    <text evidence="7">First observed at 10.5 dpc in the primitive gut and in the developing lung bud. Expression in the gut persists through 16.5 dpc and remains restricted primarily to the epithelial lining of the esophagus, stomach and intestine. Expression in the lung is detected in the bronchial epithelium at 14.5 dpc and at 15.5 dpc. Expressed specifically in acinar cells during pancreatic development. Detected in skeletal muscle tissues beginning at 12.5 dpc, persisting throughout all embryonic stages examined although, in older embryos expression becomes severely reduced.</text>
</comment>
<comment type="induction">
    <text>Up-regulated by XBP1. Induced by chemical activators of the unfolded protein response (UPR) such as tunicamycin and thapsigargin, and also by glucose starvation (PubMed:17612490).</text>
</comment>
<comment type="domain">
    <text>Lacks a classic transcription activation domain and instead possesses an N-terminal region capable of inhibiting heterologous activators.</text>
</comment>
<comment type="disruption phenotype">
    <text evidence="4 5">Mice display incorrect granule organization in pancreatic acinar cells and other serous exocrine cells such as parotid acini and gastric chief cells. They also display mislocalization of mitochondria and Golgi apparatus and reduced Ca(2+) uptake by mitochondria.</text>
</comment>
<proteinExistence type="evidence at protein level"/>
<feature type="chain" id="PRO_0000127151" description="Class A basic helix-loop-helix protein 15">
    <location>
        <begin position="1"/>
        <end position="197"/>
    </location>
</feature>
<feature type="domain" description="bHLH" evidence="1">
    <location>
        <begin position="72"/>
        <end position="124"/>
    </location>
</feature>
<feature type="region of interest" description="Disordered" evidence="2">
    <location>
        <begin position="1"/>
        <end position="82"/>
    </location>
</feature>
<feature type="region of interest" description="Disordered" evidence="2">
    <location>
        <begin position="178"/>
        <end position="197"/>
    </location>
</feature>
<feature type="compositionally biased region" description="Basic residues" evidence="2">
    <location>
        <begin position="1"/>
        <end position="12"/>
    </location>
</feature>
<feature type="compositionally biased region" description="Basic and acidic residues" evidence="2">
    <location>
        <begin position="65"/>
        <end position="82"/>
    </location>
</feature>
<feature type="modified residue" description="Phosphothreonine" evidence="10">
    <location>
        <position position="12"/>
    </location>
</feature>
<feature type="modified residue" description="Phosphothreonine" evidence="10">
    <location>
        <position position="25"/>
    </location>
</feature>
<feature type="sequence conflict" description="In Ref. 2; AAF17706." evidence="9" ref="2">
    <location>
        <position position="107"/>
    </location>
</feature>
<feature type="sequence conflict" description="In Ref. 2; AAF17706." evidence="9" ref="2">
    <original>Q</original>
    <variation>QV</variation>
    <location>
        <position position="166"/>
    </location>
</feature>
<organism>
    <name type="scientific">Mus musculus</name>
    <name type="common">Mouse</name>
    <dbReference type="NCBI Taxonomy" id="10090"/>
    <lineage>
        <taxon>Eukaryota</taxon>
        <taxon>Metazoa</taxon>
        <taxon>Chordata</taxon>
        <taxon>Craniata</taxon>
        <taxon>Vertebrata</taxon>
        <taxon>Euteleostomi</taxon>
        <taxon>Mammalia</taxon>
        <taxon>Eutheria</taxon>
        <taxon>Euarchontoglires</taxon>
        <taxon>Glires</taxon>
        <taxon>Rodentia</taxon>
        <taxon>Myomorpha</taxon>
        <taxon>Muroidea</taxon>
        <taxon>Muridae</taxon>
        <taxon>Murinae</taxon>
        <taxon>Mus</taxon>
        <taxon>Mus</taxon>
    </lineage>
</organism>